<keyword id="KW-0131">Cell cycle</keyword>
<keyword id="KW-0132">Cell division</keyword>
<keyword id="KW-1185">Reference proteome</keyword>
<dbReference type="EMBL" id="CP001104">
    <property type="protein sequence ID" value="ACR72003.1"/>
    <property type="molecule type" value="Genomic_DNA"/>
</dbReference>
<dbReference type="RefSeq" id="WP_012739238.1">
    <property type="nucleotide sequence ID" value="NC_012778.1"/>
</dbReference>
<dbReference type="STRING" id="515620.EUBELI_01002"/>
<dbReference type="GeneID" id="41355730"/>
<dbReference type="KEGG" id="eel:EUBELI_01002"/>
<dbReference type="eggNOG" id="COG0851">
    <property type="taxonomic scope" value="Bacteria"/>
</dbReference>
<dbReference type="HOGENOM" id="CLU_137929_1_0_9"/>
<dbReference type="Proteomes" id="UP000001476">
    <property type="component" value="Chromosome"/>
</dbReference>
<dbReference type="GO" id="GO:0051301">
    <property type="term" value="P:cell division"/>
    <property type="evidence" value="ECO:0007669"/>
    <property type="project" value="UniProtKB-KW"/>
</dbReference>
<dbReference type="GO" id="GO:0032955">
    <property type="term" value="P:regulation of division septum assembly"/>
    <property type="evidence" value="ECO:0007669"/>
    <property type="project" value="InterPro"/>
</dbReference>
<dbReference type="Gene3D" id="3.30.1070.10">
    <property type="entry name" value="Cell division topological specificity factor MinE"/>
    <property type="match status" value="1"/>
</dbReference>
<dbReference type="HAMAP" id="MF_00262">
    <property type="entry name" value="MinE"/>
    <property type="match status" value="1"/>
</dbReference>
<dbReference type="InterPro" id="IPR005527">
    <property type="entry name" value="MinE"/>
</dbReference>
<dbReference type="InterPro" id="IPR036707">
    <property type="entry name" value="MinE_sf"/>
</dbReference>
<dbReference type="NCBIfam" id="TIGR01215">
    <property type="entry name" value="minE"/>
    <property type="match status" value="1"/>
</dbReference>
<dbReference type="Pfam" id="PF03776">
    <property type="entry name" value="MinE"/>
    <property type="match status" value="1"/>
</dbReference>
<dbReference type="SUPFAM" id="SSF55229">
    <property type="entry name" value="Cell division protein MinE topological specificity domain"/>
    <property type="match status" value="1"/>
</dbReference>
<name>MINE_LACE2</name>
<sequence>MGLLDLFKKKGSSDVAKDRLKLLLVSDRANCSPEVMEMIKNDIIKVISKYMEIDTDGLDIQITSTESDTNNGSVPAIFANIPIKDMRNSEK</sequence>
<comment type="function">
    <text evidence="1">Prevents the cell division inhibition by proteins MinC and MinD at internal division sites while permitting inhibition at polar sites. This ensures cell division at the proper site by restricting the formation of a division septum at the midpoint of the long axis of the cell.</text>
</comment>
<comment type="similarity">
    <text evidence="1">Belongs to the MinE family.</text>
</comment>
<reference key="1">
    <citation type="journal article" date="2009" name="Proc. Natl. Acad. Sci. U.S.A.">
        <title>Characterizing a model human gut microbiota composed of members of its two dominant bacterial phyla.</title>
        <authorList>
            <person name="Mahowald M.A."/>
            <person name="Rey F.E."/>
            <person name="Seedorf H."/>
            <person name="Turnbaugh P.J."/>
            <person name="Fulton R.S."/>
            <person name="Wollam A."/>
            <person name="Shah N."/>
            <person name="Wang C."/>
            <person name="Magrini V."/>
            <person name="Wilson R.K."/>
            <person name="Cantarel B.L."/>
            <person name="Coutinho P.M."/>
            <person name="Henrissat B."/>
            <person name="Crock L.W."/>
            <person name="Russell A."/>
            <person name="Verberkmoes N.C."/>
            <person name="Hettich R.L."/>
            <person name="Gordon J.I."/>
        </authorList>
    </citation>
    <scope>NUCLEOTIDE SEQUENCE [LARGE SCALE GENOMIC DNA]</scope>
    <source>
        <strain>ATCC 27750 / DSM 3376 / VPI C15-48 / C15-B4</strain>
    </source>
</reference>
<protein>
    <recommendedName>
        <fullName evidence="1">Cell division topological specificity factor</fullName>
    </recommendedName>
</protein>
<accession>C4Z090</accession>
<evidence type="ECO:0000255" key="1">
    <source>
        <dbReference type="HAMAP-Rule" id="MF_00262"/>
    </source>
</evidence>
<gene>
    <name evidence="1" type="primary">minE</name>
    <name type="ordered locus">EUBELI_01002</name>
</gene>
<organism>
    <name type="scientific">Lachnospira eligens (strain ATCC 27750 / DSM 3376 / VPI C15-48 / C15-B4)</name>
    <name type="common">Eubacterium eligens</name>
    <dbReference type="NCBI Taxonomy" id="515620"/>
    <lineage>
        <taxon>Bacteria</taxon>
        <taxon>Bacillati</taxon>
        <taxon>Bacillota</taxon>
        <taxon>Clostridia</taxon>
        <taxon>Lachnospirales</taxon>
        <taxon>Lachnospiraceae</taxon>
        <taxon>Lachnospira</taxon>
    </lineage>
</organism>
<feature type="chain" id="PRO_1000204681" description="Cell division topological specificity factor">
    <location>
        <begin position="1"/>
        <end position="91"/>
    </location>
</feature>
<proteinExistence type="inferred from homology"/>